<reference key="1">
    <citation type="submission" date="2006-06" db="EMBL/GenBank/DDBJ databases">
        <title>Complete sequence of chromosome of Mycobacterium sp. MCS.</title>
        <authorList>
            <consortium name="US DOE Joint Genome Institute"/>
            <person name="Copeland A."/>
            <person name="Lucas S."/>
            <person name="Lapidus A."/>
            <person name="Barry K."/>
            <person name="Detter J.C."/>
            <person name="Glavina del Rio T."/>
            <person name="Hammon N."/>
            <person name="Israni S."/>
            <person name="Dalin E."/>
            <person name="Tice H."/>
            <person name="Pitluck S."/>
            <person name="Martinez M."/>
            <person name="Schmutz J."/>
            <person name="Larimer F."/>
            <person name="Land M."/>
            <person name="Hauser L."/>
            <person name="Kyrpides N."/>
            <person name="Kim E."/>
            <person name="Miller C.D."/>
            <person name="Hughes J.E."/>
            <person name="Anderson A.J."/>
            <person name="Sims R.C."/>
            <person name="Richardson P."/>
        </authorList>
    </citation>
    <scope>NUCLEOTIDE SEQUENCE [LARGE SCALE GENOMIC DNA]</scope>
    <source>
        <strain>MCS</strain>
    </source>
</reference>
<proteinExistence type="inferred from homology"/>
<dbReference type="EC" id="2.1.1.-"/>
<dbReference type="EMBL" id="CP000384">
    <property type="protein sequence ID" value="ABG07157.1"/>
    <property type="molecule type" value="Genomic_DNA"/>
</dbReference>
<dbReference type="SMR" id="Q1BD77"/>
<dbReference type="KEGG" id="mmc:Mmcs_1043"/>
<dbReference type="HOGENOM" id="CLU_056160_2_1_11"/>
<dbReference type="BioCyc" id="MSP164756:G1G6O-1068-MONOMER"/>
<dbReference type="GO" id="GO:0008168">
    <property type="term" value="F:methyltransferase activity"/>
    <property type="evidence" value="ECO:0007669"/>
    <property type="project" value="UniProtKB-KW"/>
</dbReference>
<dbReference type="GO" id="GO:0032259">
    <property type="term" value="P:methylation"/>
    <property type="evidence" value="ECO:0007669"/>
    <property type="project" value="UniProtKB-KW"/>
</dbReference>
<dbReference type="FunFam" id="3.40.50.150:FF:000152">
    <property type="entry name" value="S-adenosyl-L-methionine-dependent methyltransferase"/>
    <property type="match status" value="1"/>
</dbReference>
<dbReference type="Gene3D" id="3.40.50.150">
    <property type="entry name" value="Vaccinia Virus protein VP39"/>
    <property type="match status" value="1"/>
</dbReference>
<dbReference type="InterPro" id="IPR007213">
    <property type="entry name" value="Ppm1/Ppm2/Tcmp"/>
</dbReference>
<dbReference type="InterPro" id="IPR029063">
    <property type="entry name" value="SAM-dependent_MTases_sf"/>
</dbReference>
<dbReference type="InterPro" id="IPR011610">
    <property type="entry name" value="SAM_mthyl_Trfase_ML2640-like"/>
</dbReference>
<dbReference type="NCBIfam" id="TIGR00027">
    <property type="entry name" value="mthyl_TIGR00027"/>
    <property type="match status" value="1"/>
</dbReference>
<dbReference type="PANTHER" id="PTHR43619">
    <property type="entry name" value="S-ADENOSYL-L-METHIONINE-DEPENDENT METHYLTRANSFERASE YKTD-RELATED"/>
    <property type="match status" value="1"/>
</dbReference>
<dbReference type="PANTHER" id="PTHR43619:SF2">
    <property type="entry name" value="S-ADENOSYL-L-METHIONINE-DEPENDENT METHYLTRANSFERASES SUPERFAMILY PROTEIN"/>
    <property type="match status" value="1"/>
</dbReference>
<dbReference type="Pfam" id="PF04072">
    <property type="entry name" value="LCM"/>
    <property type="match status" value="1"/>
</dbReference>
<dbReference type="SUPFAM" id="SSF53335">
    <property type="entry name" value="S-adenosyl-L-methionine-dependent methyltransferases"/>
    <property type="match status" value="1"/>
</dbReference>
<keyword id="KW-0489">Methyltransferase</keyword>
<keyword id="KW-0949">S-adenosyl-L-methionine</keyword>
<keyword id="KW-0808">Transferase</keyword>
<protein>
    <recommendedName>
        <fullName>Putative S-adenosyl-L-methionine-dependent methyltransferase Mmcs_1043</fullName>
        <ecNumber>2.1.1.-</ecNumber>
    </recommendedName>
</protein>
<evidence type="ECO:0000250" key="1"/>
<evidence type="ECO:0000305" key="2"/>
<comment type="function">
    <text evidence="1">Exhibits S-adenosyl-L-methionine-dependent methyltransferase activity.</text>
</comment>
<comment type="similarity">
    <text evidence="2">Belongs to the UPF0677 family.</text>
</comment>
<feature type="chain" id="PRO_0000361217" description="Putative S-adenosyl-L-methionine-dependent methyltransferase Mmcs_1043">
    <location>
        <begin position="1"/>
        <end position="304"/>
    </location>
</feature>
<feature type="binding site" evidence="1">
    <location>
        <position position="130"/>
    </location>
    <ligand>
        <name>S-adenosyl-L-methionine</name>
        <dbReference type="ChEBI" id="CHEBI:59789"/>
    </ligand>
</feature>
<feature type="binding site" evidence="1">
    <location>
        <begin position="159"/>
        <end position="160"/>
    </location>
    <ligand>
        <name>S-adenosyl-L-methionine</name>
        <dbReference type="ChEBI" id="CHEBI:59789"/>
    </ligand>
</feature>
<organism>
    <name type="scientific">Mycobacterium sp. (strain MCS)</name>
    <dbReference type="NCBI Taxonomy" id="164756"/>
    <lineage>
        <taxon>Bacteria</taxon>
        <taxon>Bacillati</taxon>
        <taxon>Actinomycetota</taxon>
        <taxon>Actinomycetes</taxon>
        <taxon>Mycobacteriales</taxon>
        <taxon>Mycobacteriaceae</taxon>
        <taxon>Mycobacterium</taxon>
    </lineage>
</organism>
<gene>
    <name type="ordered locus">Mmcs_1043</name>
</gene>
<sequence>MARAEGDSWDVASSVGATAAMVAAGRAVATRDPRGLIDDPYAAPLVRAVGIEFFTKVADGEFDITELDPSSAAEMQARIDEMALRTRFFDDYFLASTAGGIRQVVILASGLDSRAYRLPWPDGTVVYEIDQPAVIDFKTSILAGIGAEPTAERRTVAIDLREDWPAALRVAGFDSAAPTAWCAEGLLIYLPPEAQDLLFDNVTALSAAGSTVATEYVPGILNFDAEKARAASAQMRERGLDLDMPSLVYHGERKHVMEYLTSLGWTMAGLPRTDLFAKHGVPMVAHDNDPLGEIVYVSGTYQNR</sequence>
<name>Y1043_MYCSS</name>
<accession>Q1BD77</accession>